<name>ATD3B_XENLA</name>
<proteinExistence type="evidence at transcript level"/>
<accession>Q6PAX2</accession>
<sequence>MSWLFGLNRGQPEPPGVPGFPEPPSPPGGSGDGGDKNRPKDKWSNFDPTGLERAAKAARELDQSRHAKEALNLAKVQEETLQMEQQAKIKEYEAAVEQIKNEQIRVQSEEKRKTLNEETKQHQARAQYQDKLARQRYEDQLRQQQLQNEENLRRQEESVQKQEAMRKATVEHEMELRHKNDMLRIEAEAHARAKVERENADIIREQIRLKAAEHRQTVLESIKTAGTVFGEGFRTFISDWDKVTATVAGLTLLAVGVYTAKNGTGVAGRYIEARLGKPSLVRDTSRITVVEAIKHPIKISKRIFSKIQDALEGVILSPRLEERVRDIAIATRNTKANKGLYRNILMYGPPGTGKTLFAKKLAMHSSMDYAIMTGGDVAPMGREGVTAMHKVFDWAGTSKRGLLLFVDEADAFLRKRSTEKISEDLRATLNAFLYRTGEQSNKFMLVLASNQPEQFDWAINDRIDEIVHFDLPGLEERERLVRLYFDKYVLQPASEGKQRLKVAQFDYGKKCSELATLTEGMSGREISKLGVAWQAAAYASEDGILTEAMIDARVADAIRQHQQKMEWLKAEGKESTKEIGKNPLQPLLEGTPV</sequence>
<evidence type="ECO:0000250" key="1">
    <source>
        <dbReference type="UniProtKB" id="Q9NVI7"/>
    </source>
</evidence>
<evidence type="ECO:0000255" key="2"/>
<evidence type="ECO:0000256" key="3">
    <source>
        <dbReference type="SAM" id="MobiDB-lite"/>
    </source>
</evidence>
<evidence type="ECO:0000305" key="4"/>
<feature type="chain" id="PRO_0000311983" description="ATPase family AAA domain-containing protein 3-B">
    <location>
        <begin position="1"/>
        <end position="593"/>
    </location>
</feature>
<feature type="topological domain" description="Mitochondrial intermembrane" evidence="2">
    <location>
        <begin position="1"/>
        <end position="242"/>
    </location>
</feature>
<feature type="transmembrane region" description="Helical" evidence="2">
    <location>
        <begin position="243"/>
        <end position="260"/>
    </location>
</feature>
<feature type="topological domain" description="Mitochondrial matrix" evidence="2">
    <location>
        <begin position="261"/>
        <end position="593"/>
    </location>
</feature>
<feature type="region of interest" description="Disordered" evidence="3">
    <location>
        <begin position="1"/>
        <end position="64"/>
    </location>
</feature>
<feature type="region of interest" description="Disordered" evidence="3">
    <location>
        <begin position="109"/>
        <end position="129"/>
    </location>
</feature>
<feature type="region of interest" description="Disordered" evidence="3">
    <location>
        <begin position="145"/>
        <end position="164"/>
    </location>
</feature>
<feature type="region of interest" description="Disordered" evidence="3">
    <location>
        <begin position="570"/>
        <end position="593"/>
    </location>
</feature>
<feature type="coiled-coil region" evidence="2">
    <location>
        <begin position="51"/>
        <end position="215"/>
    </location>
</feature>
<feature type="compositionally biased region" description="Pro residues" evidence="3">
    <location>
        <begin position="12"/>
        <end position="27"/>
    </location>
</feature>
<feature type="compositionally biased region" description="Basic and acidic residues" evidence="3">
    <location>
        <begin position="33"/>
        <end position="44"/>
    </location>
</feature>
<feature type="compositionally biased region" description="Basic and acidic residues" evidence="3">
    <location>
        <begin position="53"/>
        <end position="64"/>
    </location>
</feature>
<feature type="compositionally biased region" description="Basic and acidic residues" evidence="3">
    <location>
        <begin position="109"/>
        <end position="121"/>
    </location>
</feature>
<feature type="compositionally biased region" description="Basic and acidic residues" evidence="3">
    <location>
        <begin position="150"/>
        <end position="164"/>
    </location>
</feature>
<feature type="compositionally biased region" description="Basic and acidic residues" evidence="3">
    <location>
        <begin position="570"/>
        <end position="580"/>
    </location>
</feature>
<feature type="binding site" evidence="2">
    <location>
        <begin position="348"/>
        <end position="355"/>
    </location>
    <ligand>
        <name>ATP</name>
        <dbReference type="ChEBI" id="CHEBI:30616"/>
    </ligand>
</feature>
<gene>
    <name type="primary">atad3-b</name>
</gene>
<comment type="function">
    <text evidence="1">Essential for mitochondrial network organization, mitochondrial metabolism and cell growth at organism and cellular level. May play an important role in mitochondrial protein synthesis. May also participate in mitochondrial DNA replication. May bind to mitochondrial DNA D-loops and contribute to nucleoid stability. Required for enhanced channeling of cholesterol for hormone-dependent steroidogenesis. Involved in mitochondrial-mediated antiviral innate immunity. Required to protect mitochondria from the PERK-mediated unfolded protein response: specifically inhibits the activity of EIF2AK3/PERK at mitochondria-endoplasmic reticulum contact sites, thereby providing a safe haven for mitochondrial protein translation during endoplasmic reticulum stress. Ability to inhibit EIF2AK3/PERK is independent of its ATPase activity. Also involved in the mitochondrial DNA damage response by promoting signaling between damaged genomes and the mitochondrial membrane, leading to activation of the integrated stress response (ISR).</text>
</comment>
<comment type="catalytic activity">
    <reaction evidence="1">
        <text>ATP + H2O = ADP + phosphate + H(+)</text>
        <dbReference type="Rhea" id="RHEA:13065"/>
        <dbReference type="ChEBI" id="CHEBI:15377"/>
        <dbReference type="ChEBI" id="CHEBI:15378"/>
        <dbReference type="ChEBI" id="CHEBI:30616"/>
        <dbReference type="ChEBI" id="CHEBI:43474"/>
        <dbReference type="ChEBI" id="CHEBI:456216"/>
    </reaction>
    <physiologicalReaction direction="left-to-right" evidence="1">
        <dbReference type="Rhea" id="RHEA:13066"/>
    </physiologicalReaction>
</comment>
<comment type="subunit">
    <text evidence="1">Can form homooligomers. Homodimer formation at the N-terminus may be regulated by ATP and is required for the interaction with the inner surface of the mitochondrial outer membrane and correct mitochondrial homeostasis.</text>
</comment>
<comment type="subcellular location">
    <subcellularLocation>
        <location evidence="1">Mitochondrion inner membrane</location>
        <topology evidence="1">Single-pass membrane protein</topology>
    </subcellularLocation>
    <subcellularLocation>
        <location evidence="1">Mitochondrion matrix</location>
        <location evidence="1">Mitochondrion nucleoid</location>
    </subcellularLocation>
    <text evidence="1">In the mitochondrial inner membrane, enriched in sites with the potential to form contacts with the outer membrane. The N-terminal domain interacts with the inner surface of the mitochondrial outer membrane and the C-terminal domain localizes in a specific matrix compartment, where it is associated with nucleoids. Also present at mitochondria-endoplasmic reticulum contact sites.</text>
</comment>
<comment type="domain">
    <text evidence="1">The transmembrane domain and a C-terminal adjacent region contain all information necessary for mitochondrial targeting.</text>
</comment>
<comment type="similarity">
    <text evidence="4">Belongs to the AAA ATPase family.</text>
</comment>
<organism>
    <name type="scientific">Xenopus laevis</name>
    <name type="common">African clawed frog</name>
    <dbReference type="NCBI Taxonomy" id="8355"/>
    <lineage>
        <taxon>Eukaryota</taxon>
        <taxon>Metazoa</taxon>
        <taxon>Chordata</taxon>
        <taxon>Craniata</taxon>
        <taxon>Vertebrata</taxon>
        <taxon>Euteleostomi</taxon>
        <taxon>Amphibia</taxon>
        <taxon>Batrachia</taxon>
        <taxon>Anura</taxon>
        <taxon>Pipoidea</taxon>
        <taxon>Pipidae</taxon>
        <taxon>Xenopodinae</taxon>
        <taxon>Xenopus</taxon>
        <taxon>Xenopus</taxon>
    </lineage>
</organism>
<reference key="1">
    <citation type="submission" date="2003-10" db="EMBL/GenBank/DDBJ databases">
        <authorList>
            <consortium name="NIH - Xenopus Gene Collection (XGC) project"/>
        </authorList>
    </citation>
    <scope>NUCLEOTIDE SEQUENCE [LARGE SCALE MRNA]</scope>
    <source>
        <tissue>Kidney</tissue>
    </source>
</reference>
<dbReference type="EC" id="3.6.1.-" evidence="1"/>
<dbReference type="EMBL" id="BC060012">
    <property type="protein sequence ID" value="AAH60012.1"/>
    <property type="molecule type" value="mRNA"/>
</dbReference>
<dbReference type="RefSeq" id="NP_001083126.1">
    <property type="nucleotide sequence ID" value="NM_001089657.1"/>
</dbReference>
<dbReference type="SMR" id="Q6PAX2"/>
<dbReference type="DNASU" id="398759"/>
<dbReference type="GeneID" id="398759"/>
<dbReference type="KEGG" id="xla:398759"/>
<dbReference type="AGR" id="Xenbase:XB-GENE-946134"/>
<dbReference type="CTD" id="398759"/>
<dbReference type="Xenbase" id="XB-GENE-946134">
    <property type="gene designation" value="atad3a.L"/>
</dbReference>
<dbReference type="OMA" id="HKSITGG"/>
<dbReference type="OrthoDB" id="199596at2759"/>
<dbReference type="Proteomes" id="UP000186698">
    <property type="component" value="Chromosome 7L"/>
</dbReference>
<dbReference type="Bgee" id="398759">
    <property type="expression patterns" value="Expressed in blastula and 19 other cell types or tissues"/>
</dbReference>
<dbReference type="GO" id="GO:0005743">
    <property type="term" value="C:mitochondrial inner membrane"/>
    <property type="evidence" value="ECO:0007669"/>
    <property type="project" value="UniProtKB-SubCell"/>
</dbReference>
<dbReference type="GO" id="GO:0042645">
    <property type="term" value="C:mitochondrial nucleoid"/>
    <property type="evidence" value="ECO:0007669"/>
    <property type="project" value="UniProtKB-SubCell"/>
</dbReference>
<dbReference type="GO" id="GO:0005739">
    <property type="term" value="C:mitochondrion"/>
    <property type="evidence" value="ECO:0000318"/>
    <property type="project" value="GO_Central"/>
</dbReference>
<dbReference type="GO" id="GO:0005524">
    <property type="term" value="F:ATP binding"/>
    <property type="evidence" value="ECO:0007669"/>
    <property type="project" value="UniProtKB-KW"/>
</dbReference>
<dbReference type="GO" id="GO:0016887">
    <property type="term" value="F:ATP hydrolysis activity"/>
    <property type="evidence" value="ECO:0000250"/>
    <property type="project" value="UniProtKB"/>
</dbReference>
<dbReference type="GO" id="GO:0030291">
    <property type="term" value="F:protein serine/threonine kinase inhibitor activity"/>
    <property type="evidence" value="ECO:0000250"/>
    <property type="project" value="UniProtKB"/>
</dbReference>
<dbReference type="GO" id="GO:0008270">
    <property type="term" value="F:zinc ion binding"/>
    <property type="evidence" value="ECO:0007669"/>
    <property type="project" value="TreeGrafter"/>
</dbReference>
<dbReference type="GO" id="GO:0007005">
    <property type="term" value="P:mitochondrion organization"/>
    <property type="evidence" value="ECO:0000318"/>
    <property type="project" value="GO_Central"/>
</dbReference>
<dbReference type="GO" id="GO:1903898">
    <property type="term" value="P:negative regulation of PERK-mediated unfolded protein response"/>
    <property type="evidence" value="ECO:0000250"/>
    <property type="project" value="UniProtKB"/>
</dbReference>
<dbReference type="CDD" id="cd19512">
    <property type="entry name" value="RecA-like_ATAD3-like"/>
    <property type="match status" value="1"/>
</dbReference>
<dbReference type="FunFam" id="3.40.50.300:FF:000470">
    <property type="entry name" value="ATPase family, AAA domain containing 3A"/>
    <property type="match status" value="1"/>
</dbReference>
<dbReference type="Gene3D" id="3.40.50.300">
    <property type="entry name" value="P-loop containing nucleotide triphosphate hydrolases"/>
    <property type="match status" value="1"/>
</dbReference>
<dbReference type="InterPro" id="IPR003593">
    <property type="entry name" value="AAA+_ATPase"/>
</dbReference>
<dbReference type="InterPro" id="IPR021911">
    <property type="entry name" value="ATAD3_N"/>
</dbReference>
<dbReference type="InterPro" id="IPR003959">
    <property type="entry name" value="ATPase_AAA_core"/>
</dbReference>
<dbReference type="InterPro" id="IPR027417">
    <property type="entry name" value="P-loop_NTPase"/>
</dbReference>
<dbReference type="PANTHER" id="PTHR23075:SF0">
    <property type="entry name" value="ATPASE FAMILY AAA DOMAIN-CONTAINING PROTEIN 3"/>
    <property type="match status" value="1"/>
</dbReference>
<dbReference type="PANTHER" id="PTHR23075">
    <property type="entry name" value="PUTATIVE ATP-ASE"/>
    <property type="match status" value="1"/>
</dbReference>
<dbReference type="Pfam" id="PF00004">
    <property type="entry name" value="AAA"/>
    <property type="match status" value="1"/>
</dbReference>
<dbReference type="Pfam" id="PF12037">
    <property type="entry name" value="ATAD3_N"/>
    <property type="match status" value="1"/>
</dbReference>
<dbReference type="SMART" id="SM00382">
    <property type="entry name" value="AAA"/>
    <property type="match status" value="1"/>
</dbReference>
<dbReference type="SUPFAM" id="SSF52540">
    <property type="entry name" value="P-loop containing nucleoside triphosphate hydrolases"/>
    <property type="match status" value="1"/>
</dbReference>
<protein>
    <recommendedName>
        <fullName>ATPase family AAA domain-containing protein 3-B</fullName>
        <ecNumber evidence="1">3.6.1.-</ecNumber>
    </recommendedName>
</protein>
<keyword id="KW-0067">ATP-binding</keyword>
<keyword id="KW-0175">Coiled coil</keyword>
<keyword id="KW-0378">Hydrolase</keyword>
<keyword id="KW-0472">Membrane</keyword>
<keyword id="KW-0496">Mitochondrion</keyword>
<keyword id="KW-0999">Mitochondrion inner membrane</keyword>
<keyword id="KW-1135">Mitochondrion nucleoid</keyword>
<keyword id="KW-0547">Nucleotide-binding</keyword>
<keyword id="KW-1185">Reference proteome</keyword>
<keyword id="KW-0812">Transmembrane</keyword>
<keyword id="KW-1133">Transmembrane helix</keyword>